<comment type="similarity">
    <text evidence="1">Belongs to the bacterial ribosomal protein bL27 family.</text>
</comment>
<evidence type="ECO:0000255" key="1">
    <source>
        <dbReference type="HAMAP-Rule" id="MF_00539"/>
    </source>
</evidence>
<evidence type="ECO:0000256" key="2">
    <source>
        <dbReference type="SAM" id="MobiDB-lite"/>
    </source>
</evidence>
<evidence type="ECO:0000305" key="3"/>
<sequence>MAHKKAGGSSRNGRDSESKRLGVKRYAGQEVISGNIIIRQRGTQFYPGANVGIGKDHTLFATAEGVVKFERKGPRQVRTVSVVSAA</sequence>
<organism>
    <name type="scientific">Acidithiobacillus ferrooxidans (strain ATCC 23270 / DSM 14882 / CIP 104768 / NCIMB 8455)</name>
    <name type="common">Ferrobacillus ferrooxidans (strain ATCC 23270)</name>
    <dbReference type="NCBI Taxonomy" id="243159"/>
    <lineage>
        <taxon>Bacteria</taxon>
        <taxon>Pseudomonadati</taxon>
        <taxon>Pseudomonadota</taxon>
        <taxon>Acidithiobacillia</taxon>
        <taxon>Acidithiobacillales</taxon>
        <taxon>Acidithiobacillaceae</taxon>
        <taxon>Acidithiobacillus</taxon>
    </lineage>
</organism>
<reference key="1">
    <citation type="journal article" date="2008" name="BMC Genomics">
        <title>Acidithiobacillus ferrooxidans metabolism: from genome sequence to industrial applications.</title>
        <authorList>
            <person name="Valdes J."/>
            <person name="Pedroso I."/>
            <person name="Quatrini R."/>
            <person name="Dodson R.J."/>
            <person name="Tettelin H."/>
            <person name="Blake R. II"/>
            <person name="Eisen J.A."/>
            <person name="Holmes D.S."/>
        </authorList>
    </citation>
    <scope>NUCLEOTIDE SEQUENCE [LARGE SCALE GENOMIC DNA]</scope>
    <source>
        <strain>ATCC 23270 / DSM 14882 / CIP 104768 / NCIMB 8455</strain>
    </source>
</reference>
<dbReference type="EMBL" id="CP001219">
    <property type="protein sequence ID" value="ACK78123.1"/>
    <property type="molecule type" value="Genomic_DNA"/>
</dbReference>
<dbReference type="RefSeq" id="WP_009565803.1">
    <property type="nucleotide sequence ID" value="NC_011761.1"/>
</dbReference>
<dbReference type="SMR" id="B7J428"/>
<dbReference type="STRING" id="243159.AFE_0284"/>
<dbReference type="PaxDb" id="243159-AFE_0284"/>
<dbReference type="GeneID" id="89663841"/>
<dbReference type="KEGG" id="afr:AFE_0284"/>
<dbReference type="eggNOG" id="COG0211">
    <property type="taxonomic scope" value="Bacteria"/>
</dbReference>
<dbReference type="HOGENOM" id="CLU_095424_4_1_6"/>
<dbReference type="Proteomes" id="UP000001362">
    <property type="component" value="Chromosome"/>
</dbReference>
<dbReference type="GO" id="GO:0022625">
    <property type="term" value="C:cytosolic large ribosomal subunit"/>
    <property type="evidence" value="ECO:0007669"/>
    <property type="project" value="TreeGrafter"/>
</dbReference>
<dbReference type="GO" id="GO:0003735">
    <property type="term" value="F:structural constituent of ribosome"/>
    <property type="evidence" value="ECO:0007669"/>
    <property type="project" value="InterPro"/>
</dbReference>
<dbReference type="GO" id="GO:0006412">
    <property type="term" value="P:translation"/>
    <property type="evidence" value="ECO:0007669"/>
    <property type="project" value="UniProtKB-UniRule"/>
</dbReference>
<dbReference type="FunFam" id="2.40.50.100:FF:000004">
    <property type="entry name" value="50S ribosomal protein L27"/>
    <property type="match status" value="1"/>
</dbReference>
<dbReference type="Gene3D" id="2.40.50.100">
    <property type="match status" value="1"/>
</dbReference>
<dbReference type="HAMAP" id="MF_00539">
    <property type="entry name" value="Ribosomal_bL27"/>
    <property type="match status" value="1"/>
</dbReference>
<dbReference type="InterPro" id="IPR001684">
    <property type="entry name" value="Ribosomal_bL27"/>
</dbReference>
<dbReference type="InterPro" id="IPR018261">
    <property type="entry name" value="Ribosomal_bL27_CS"/>
</dbReference>
<dbReference type="NCBIfam" id="TIGR00062">
    <property type="entry name" value="L27"/>
    <property type="match status" value="1"/>
</dbReference>
<dbReference type="PANTHER" id="PTHR15893:SF0">
    <property type="entry name" value="LARGE RIBOSOMAL SUBUNIT PROTEIN BL27M"/>
    <property type="match status" value="1"/>
</dbReference>
<dbReference type="PANTHER" id="PTHR15893">
    <property type="entry name" value="RIBOSOMAL PROTEIN L27"/>
    <property type="match status" value="1"/>
</dbReference>
<dbReference type="Pfam" id="PF01016">
    <property type="entry name" value="Ribosomal_L27"/>
    <property type="match status" value="1"/>
</dbReference>
<dbReference type="PRINTS" id="PR00063">
    <property type="entry name" value="RIBOSOMALL27"/>
</dbReference>
<dbReference type="SUPFAM" id="SSF110324">
    <property type="entry name" value="Ribosomal L27 protein-like"/>
    <property type="match status" value="1"/>
</dbReference>
<dbReference type="PROSITE" id="PS00831">
    <property type="entry name" value="RIBOSOMAL_L27"/>
    <property type="match status" value="1"/>
</dbReference>
<gene>
    <name evidence="1" type="primary">rpmA</name>
    <name type="ordered locus">AFE_0284</name>
</gene>
<name>RL27_ACIF2</name>
<proteinExistence type="inferred from homology"/>
<keyword id="KW-1185">Reference proteome</keyword>
<keyword id="KW-0687">Ribonucleoprotein</keyword>
<keyword id="KW-0689">Ribosomal protein</keyword>
<accession>B7J428</accession>
<protein>
    <recommendedName>
        <fullName evidence="1">Large ribosomal subunit protein bL27</fullName>
    </recommendedName>
    <alternativeName>
        <fullName evidence="3">50S ribosomal protein L27</fullName>
    </alternativeName>
</protein>
<feature type="chain" id="PRO_1000128680" description="Large ribosomal subunit protein bL27">
    <location>
        <begin position="1"/>
        <end position="86"/>
    </location>
</feature>
<feature type="region of interest" description="Disordered" evidence="2">
    <location>
        <begin position="1"/>
        <end position="22"/>
    </location>
</feature>